<evidence type="ECO:0000250" key="1">
    <source>
        <dbReference type="UniProtKB" id="P04798"/>
    </source>
</evidence>
<evidence type="ECO:0000269" key="2">
    <source>
    </source>
</evidence>
<evidence type="ECO:0000269" key="3">
    <source>
    </source>
</evidence>
<evidence type="ECO:0000269" key="4">
    <source>
    </source>
</evidence>
<evidence type="ECO:0000269" key="5">
    <source>
    </source>
</evidence>
<evidence type="ECO:0000269" key="6">
    <source>
    </source>
</evidence>
<evidence type="ECO:0000269" key="7">
    <source>
    </source>
</evidence>
<evidence type="ECO:0000269" key="8">
    <source>
    </source>
</evidence>
<evidence type="ECO:0000303" key="9">
    <source>
    </source>
</evidence>
<evidence type="ECO:0000303" key="10">
    <source>
    </source>
</evidence>
<evidence type="ECO:0000305" key="11"/>
<dbReference type="EC" id="1.14.-.-" evidence="5 6"/>
<dbReference type="EMBL" id="KY950681">
    <property type="protein sequence ID" value="AUZ97938.1"/>
    <property type="molecule type" value="mRNA"/>
</dbReference>
<dbReference type="EMBL" id="CH476602">
    <property type="protein sequence ID" value="EAU32821.1"/>
    <property type="status" value="ALT_SEQ"/>
    <property type="molecule type" value="Genomic_DNA"/>
</dbReference>
<dbReference type="RefSeq" id="XP_001215455.1">
    <property type="nucleotide sequence ID" value="XM_001215455.1"/>
</dbReference>
<dbReference type="SMR" id="Q0CJ57"/>
<dbReference type="STRING" id="341663.Q0CJ57"/>
<dbReference type="EnsemblFungi" id="EAU32821">
    <property type="protein sequence ID" value="EAU32821"/>
    <property type="gene ID" value="ATEG_06277"/>
</dbReference>
<dbReference type="GeneID" id="4322101"/>
<dbReference type="KEGG" id="ag:EAU32821"/>
<dbReference type="VEuPathDB" id="FungiDB:ATEG_06277"/>
<dbReference type="eggNOG" id="KOG0156">
    <property type="taxonomic scope" value="Eukaryota"/>
</dbReference>
<dbReference type="HOGENOM" id="CLU_001570_2_1_1"/>
<dbReference type="OMA" id="ESHRWRP"/>
<dbReference type="OrthoDB" id="1103324at2759"/>
<dbReference type="Proteomes" id="UP000007963">
    <property type="component" value="Unassembled WGS sequence"/>
</dbReference>
<dbReference type="GO" id="GO:0020037">
    <property type="term" value="F:heme binding"/>
    <property type="evidence" value="ECO:0007669"/>
    <property type="project" value="InterPro"/>
</dbReference>
<dbReference type="GO" id="GO:0005506">
    <property type="term" value="F:iron ion binding"/>
    <property type="evidence" value="ECO:0007669"/>
    <property type="project" value="InterPro"/>
</dbReference>
<dbReference type="GO" id="GO:0004497">
    <property type="term" value="F:monooxygenase activity"/>
    <property type="evidence" value="ECO:0007669"/>
    <property type="project" value="UniProtKB-KW"/>
</dbReference>
<dbReference type="GO" id="GO:0016705">
    <property type="term" value="F:oxidoreductase activity, acting on paired donors, with incorporation or reduction of molecular oxygen"/>
    <property type="evidence" value="ECO:0007669"/>
    <property type="project" value="InterPro"/>
</dbReference>
<dbReference type="CDD" id="cd11065">
    <property type="entry name" value="CYP64-like"/>
    <property type="match status" value="1"/>
</dbReference>
<dbReference type="Gene3D" id="1.10.630.10">
    <property type="entry name" value="Cytochrome P450"/>
    <property type="match status" value="1"/>
</dbReference>
<dbReference type="InterPro" id="IPR001128">
    <property type="entry name" value="Cyt_P450"/>
</dbReference>
<dbReference type="InterPro" id="IPR002401">
    <property type="entry name" value="Cyt_P450_E_grp-I"/>
</dbReference>
<dbReference type="InterPro" id="IPR036396">
    <property type="entry name" value="Cyt_P450_sf"/>
</dbReference>
<dbReference type="InterPro" id="IPR050364">
    <property type="entry name" value="Cytochrome_P450_fung"/>
</dbReference>
<dbReference type="PANTHER" id="PTHR46300:SF2">
    <property type="entry name" value="CYTOCHROME P450 MONOOXYGENASE ALNH-RELATED"/>
    <property type="match status" value="1"/>
</dbReference>
<dbReference type="PANTHER" id="PTHR46300">
    <property type="entry name" value="P450, PUTATIVE (EUROFUNG)-RELATED-RELATED"/>
    <property type="match status" value="1"/>
</dbReference>
<dbReference type="Pfam" id="PF00067">
    <property type="entry name" value="p450"/>
    <property type="match status" value="1"/>
</dbReference>
<dbReference type="PRINTS" id="PR00463">
    <property type="entry name" value="EP450I"/>
</dbReference>
<dbReference type="SUPFAM" id="SSF48264">
    <property type="entry name" value="Cytochrome P450"/>
    <property type="match status" value="1"/>
</dbReference>
<accession>Q0CJ57</accession>
<accession>A0A2L0V395</accession>
<reference key="1">
    <citation type="journal article" date="2018" name="Sci. Rep.">
        <title>Heterologous pathway assembly reveals molecular steps of fungal terreic acid biosynthesis.</title>
        <authorList>
            <person name="Kong C."/>
            <person name="Huang H."/>
            <person name="Xue Y."/>
            <person name="Liu Y."/>
            <person name="Peng Q."/>
            <person name="Liu Q."/>
            <person name="Xu Q."/>
            <person name="Zhu Q."/>
            <person name="Yin Y."/>
            <person name="Zhou X."/>
            <person name="Zhang Y."/>
            <person name="Cai M."/>
        </authorList>
    </citation>
    <scope>NUCLEOTIDE SEQUENCE [MRNA]</scope>
    <scope>FUNCTION</scope>
    <scope>CATALYTIC ACTIVITY</scope>
    <scope>PATHWAY</scope>
    <source>
        <strain evidence="10">NIH 2624 / FGSC A1156</strain>
    </source>
</reference>
<reference key="2">
    <citation type="submission" date="2005-09" db="EMBL/GenBank/DDBJ databases">
        <title>Annotation of the Aspergillus terreus NIH2624 genome.</title>
        <authorList>
            <person name="Birren B.W."/>
            <person name="Lander E.S."/>
            <person name="Galagan J.E."/>
            <person name="Nusbaum C."/>
            <person name="Devon K."/>
            <person name="Henn M."/>
            <person name="Ma L.-J."/>
            <person name="Jaffe D.B."/>
            <person name="Butler J."/>
            <person name="Alvarez P."/>
            <person name="Gnerre S."/>
            <person name="Grabherr M."/>
            <person name="Kleber M."/>
            <person name="Mauceli E.W."/>
            <person name="Brockman W."/>
            <person name="Rounsley S."/>
            <person name="Young S.K."/>
            <person name="LaButti K."/>
            <person name="Pushparaj V."/>
            <person name="DeCaprio D."/>
            <person name="Crawford M."/>
            <person name="Koehrsen M."/>
            <person name="Engels R."/>
            <person name="Montgomery P."/>
            <person name="Pearson M."/>
            <person name="Howarth C."/>
            <person name="Larson L."/>
            <person name="Luoma S."/>
            <person name="White J."/>
            <person name="Alvarado L."/>
            <person name="Kodira C.D."/>
            <person name="Zeng Q."/>
            <person name="Oleary S."/>
            <person name="Yandava C."/>
            <person name="Denning D.W."/>
            <person name="Nierman W.C."/>
            <person name="Milne T."/>
            <person name="Madden K."/>
        </authorList>
    </citation>
    <scope>NUCLEOTIDE SEQUENCE [LARGE SCALE GENOMIC DNA]</scope>
    <source>
        <strain>NIH 2624 / FGSC A1156</strain>
    </source>
</reference>
<reference key="3">
    <citation type="journal article" date="1996" name="Mol. Gen. Genet.">
        <title>Cloning of the polyketide synthase gene atX from Aspergillus terreus and its identification as the 6-methylsalicylic acid synthase gene by heterologous expression.</title>
        <authorList>
            <person name="Fujii I."/>
            <person name="Ono Y."/>
            <person name="Tada H."/>
            <person name="Gomi K."/>
            <person name="Ebizuka Y."/>
            <person name="Sankawa U."/>
        </authorList>
    </citation>
    <scope>FUNCTION</scope>
</reference>
<reference key="4">
    <citation type="journal article" date="1997" name="Folia Microbiol. (Praha)">
        <title>Polyketide synthase gene pksM from Aspergillus terreus expressed during growth phase.</title>
        <authorList>
            <person name="Pazoutova S."/>
            <person name="Linka M."/>
            <person name="Storkova S."/>
            <person name="Schwab H."/>
        </authorList>
    </citation>
    <scope>FUNCTION</scope>
</reference>
<reference key="5">
    <citation type="journal article" date="1999" name="Proc. Natl. Acad. Sci. U.S.A.">
        <title>Terreic acid, a quinone epoxide inhibitor of Bruton's tyrosine kinase.</title>
        <authorList>
            <person name="Kawakami Y."/>
            <person name="Hartman S.E."/>
            <person name="Kinoshita E."/>
            <person name="Suzuki H."/>
            <person name="Kitaura J."/>
            <person name="Yao L."/>
            <person name="Inagaki N."/>
            <person name="Franco A."/>
            <person name="Hata D."/>
            <person name="Maeda-Yamamoto M."/>
            <person name="Fukamachi H."/>
            <person name="Nagai H."/>
            <person name="Kawakami T."/>
        </authorList>
    </citation>
    <scope>BIOTECHNOLOGY</scope>
</reference>
<reference key="6">
    <citation type="journal article" date="2014" name="J. Basic Microbiol.">
        <title>Differential antibacterial properties of the MurA inhibitors terreic acid and fosfomycin.</title>
        <authorList>
            <person name="Olesen S.H."/>
            <person name="Ingles D.J."/>
            <person name="Yang Y."/>
            <person name="Schoenbrunn E."/>
        </authorList>
    </citation>
    <scope>BIOTECHNOLOGY</scope>
</reference>
<reference key="7">
    <citation type="journal article" date="2014" name="J. Biotechnol.">
        <title>Culture-based and sequence-based insights into biosynthesis of secondary metabolites by Aspergillus terreus ATCC 20542.</title>
        <authorList>
            <person name="Boruta T."/>
            <person name="Bizukojc M."/>
        </authorList>
    </citation>
    <scope>FUNCTION</scope>
</reference>
<reference key="8">
    <citation type="journal article" date="2014" name="Org. Lett.">
        <title>Molecular genetic characterization of terreic acid pathway in Aspergillus terreus.</title>
        <authorList>
            <person name="Guo C.J."/>
            <person name="Sun W.W."/>
            <person name="Bruno K.S."/>
            <person name="Wang C.C."/>
        </authorList>
    </citation>
    <scope>FUNCTION</scope>
    <scope>DISRUPTION PHENOTYPE</scope>
</reference>
<proteinExistence type="evidence at protein level"/>
<sequence length="535" mass="61260">MATLPILDLWSTNKALVSLTISASLLLVSLLVSLFQVGRRERGLPPGPPTRLVLGNEHEIPKADSHFLMSKWAKQYGGIFSLKRFRNTTIVLTDWKIMKELVDKKSTNFSHRPPSKVADLITRGNHILMMQYGETWRTMRKLIHQYLMESQCEKEHWKVQEAEAAQMLHDFLVDPENHMKHPKRYSNSITMSLVFGIRAKSVNDEYMTRLYSLMEKWSLVLETGATPPVDSWPLLQWIPERFMGYWRRRATEVGDLMTGLYTEVLHVIENRRKAGIYKDSLMDRVLDKKDKYRFDEHQLAFLGGTLMEGGSDTSSSLILAIVQAMTQYPEVQKKAHAEIDSVIGTDRSPAWSDFRKLPYINMMIKEAHRWRPVLPLGVVHGLATDDSYNGMHLPKHSTVILNVWGMHMDPDRFENPDAFIPERYANFPELAPHYAALADGAARDHFGYGAGRRICPGIHLAERNLFIAVAKLLWAFEFKNNPAGKNDASAETGSSQGFMHCVKDYDAIVTVRGEERRQTILRELEQAQTVFAKYD</sequence>
<protein>
    <recommendedName>
        <fullName evidence="9">Cytochrome P450 monooxygenase atE</fullName>
        <ecNumber evidence="5 6">1.14.-.-</ecNumber>
    </recommendedName>
    <alternativeName>
        <fullName evidence="9">Terreic acid biosynthesis cluster protein E</fullName>
    </alternativeName>
</protein>
<name>ATE_ASPTN</name>
<organism>
    <name type="scientific">Aspergillus terreus (strain NIH 2624 / FGSC A1156)</name>
    <dbReference type="NCBI Taxonomy" id="341663"/>
    <lineage>
        <taxon>Eukaryota</taxon>
        <taxon>Fungi</taxon>
        <taxon>Dikarya</taxon>
        <taxon>Ascomycota</taxon>
        <taxon>Pezizomycotina</taxon>
        <taxon>Eurotiomycetes</taxon>
        <taxon>Eurotiomycetidae</taxon>
        <taxon>Eurotiales</taxon>
        <taxon>Aspergillaceae</taxon>
        <taxon>Aspergillus</taxon>
        <taxon>Aspergillus subgen. Circumdati</taxon>
    </lineage>
</organism>
<keyword id="KW-0349">Heme</keyword>
<keyword id="KW-0408">Iron</keyword>
<keyword id="KW-0479">Metal-binding</keyword>
<keyword id="KW-0503">Monooxygenase</keyword>
<keyword id="KW-0560">Oxidoreductase</keyword>
<keyword id="KW-1185">Reference proteome</keyword>
<feature type="chain" id="PRO_0000437639" description="Cytochrome P450 monooxygenase atE">
    <location>
        <begin position="1"/>
        <end position="535"/>
    </location>
</feature>
<feature type="binding site" description="axial binding residue" evidence="1">
    <location>
        <position position="455"/>
    </location>
    <ligand>
        <name>heme</name>
        <dbReference type="ChEBI" id="CHEBI:30413"/>
    </ligand>
    <ligandPart>
        <name>Fe</name>
        <dbReference type="ChEBI" id="CHEBI:18248"/>
    </ligandPart>
</feature>
<comment type="function">
    <text evidence="4 5 6 7 8">Cytochrome P450 monooxygenase; part of the gene cluster that mediates the biosynthesis of terreic acid, a quinone epoxide inhibitor of Bruton's tyrosine kinase (PubMed:24534845, PubMed:25265334). The first step of the pathway is the synthesis of 6-methylsalicylic acid (6-MSA) by the 6-methylsalicylic acid synthase atX (PubMed:25265334, PubMed:29391515, PubMed:9003280, PubMed:9438344). In the biosynthesis of 6-MSA, atX utilizes one acetyl-CoA and three malonyl-CoAs as its substrates and catalyzes a series of programmed reactions including Claisen condensation, reduction, aldol cyclization, and the hydrolytic cleavage that yields 6-MSA (PubMed:25265334, PubMed:9003280, PubMed:9438344). The 6-methylsalicylate 1-monooxygenase atA then catalyzes the decarboxylative hydroxylation of 6-MSA to 3-methylcatechol (PubMed:25265334, PubMed:29391515). The next step is the conversion of 3-methylcatechol to 3-methyl-1,2,4-benzenetriol by cytochrome P450 monooxygenase atE, which is enhanced by cytochrome P450 monooxygenase atG (PubMed:25265334, PubMed:29391515). Then, the epoxidase atD catalyzes the epoxidation and hydroxyl oxidation of 3-methyl-1,2,4-benzenetriol to terremutin (PubMed:29391515). Lastly, GMC oxidoreductase atC oxidizes terremutin to terreic acid (PubMed:25265334, PubMed:29391515).</text>
</comment>
<comment type="catalytic activity">
    <reaction evidence="6">
        <text>3-methylcatechol + AH2 + O2 = 3-methylbenzene-1,2,4-triol + A + H2O</text>
        <dbReference type="Rhea" id="RHEA:84151"/>
        <dbReference type="ChEBI" id="CHEBI:13193"/>
        <dbReference type="ChEBI" id="CHEBI:15377"/>
        <dbReference type="ChEBI" id="CHEBI:15379"/>
        <dbReference type="ChEBI" id="CHEBI:17499"/>
        <dbReference type="ChEBI" id="CHEBI:18404"/>
        <dbReference type="ChEBI" id="CHEBI:204745"/>
    </reaction>
    <physiologicalReaction direction="left-to-right" evidence="6">
        <dbReference type="Rhea" id="RHEA:84152"/>
    </physiologicalReaction>
</comment>
<comment type="cofactor">
    <cofactor evidence="1">
        <name>heme</name>
        <dbReference type="ChEBI" id="CHEBI:30413"/>
    </cofactor>
</comment>
<comment type="pathway">
    <text evidence="5 6">Secondary metabolite biosynthesis.</text>
</comment>
<comment type="disruption phenotype">
    <text evidence="5">Abolishes the production of terreic acid, but accumulates (2Z,4E)-2-methyl-2,4-hexadienedioic acid, a degradation product of 3-methylcatechol.</text>
</comment>
<comment type="biotechnology">
    <text evidence="2 3">Terreic acid is a metabolite with antibiotic properties (PubMed:23686727). Terreic acid also acts as a selective inhibitor of human Bruton's tyrosine kinase in mast cells and other immune cells (PubMed:10051623).</text>
</comment>
<comment type="similarity">
    <text evidence="11">Belongs to the cytochrome P450 family.</text>
</comment>
<comment type="sequence caution" evidence="11">
    <conflict type="erroneous gene model prediction">
        <sequence resource="EMBL-CDS" id="EAU32821"/>
    </conflict>
</comment>
<gene>
    <name evidence="9" type="primary">atE</name>
    <name type="ORF">ATEG_06277</name>
</gene>